<gene>
    <name type="primary">Auts2</name>
    <name evidence="8" type="synonym">Kiaa0442</name>
</gene>
<reference key="1">
    <citation type="journal article" date="2005" name="Science">
        <title>The transcriptional landscape of the mammalian genome.</title>
        <authorList>
            <person name="Carninci P."/>
            <person name="Kasukawa T."/>
            <person name="Katayama S."/>
            <person name="Gough J."/>
            <person name="Frith M.C."/>
            <person name="Maeda N."/>
            <person name="Oyama R."/>
            <person name="Ravasi T."/>
            <person name="Lenhard B."/>
            <person name="Wells C."/>
            <person name="Kodzius R."/>
            <person name="Shimokawa K."/>
            <person name="Bajic V.B."/>
            <person name="Brenner S.E."/>
            <person name="Batalov S."/>
            <person name="Forrest A.R."/>
            <person name="Zavolan M."/>
            <person name="Davis M.J."/>
            <person name="Wilming L.G."/>
            <person name="Aidinis V."/>
            <person name="Allen J.E."/>
            <person name="Ambesi-Impiombato A."/>
            <person name="Apweiler R."/>
            <person name="Aturaliya R.N."/>
            <person name="Bailey T.L."/>
            <person name="Bansal M."/>
            <person name="Baxter L."/>
            <person name="Beisel K.W."/>
            <person name="Bersano T."/>
            <person name="Bono H."/>
            <person name="Chalk A.M."/>
            <person name="Chiu K.P."/>
            <person name="Choudhary V."/>
            <person name="Christoffels A."/>
            <person name="Clutterbuck D.R."/>
            <person name="Crowe M.L."/>
            <person name="Dalla E."/>
            <person name="Dalrymple B.P."/>
            <person name="de Bono B."/>
            <person name="Della Gatta G."/>
            <person name="di Bernardo D."/>
            <person name="Down T."/>
            <person name="Engstrom P."/>
            <person name="Fagiolini M."/>
            <person name="Faulkner G."/>
            <person name="Fletcher C.F."/>
            <person name="Fukushima T."/>
            <person name="Furuno M."/>
            <person name="Futaki S."/>
            <person name="Gariboldi M."/>
            <person name="Georgii-Hemming P."/>
            <person name="Gingeras T.R."/>
            <person name="Gojobori T."/>
            <person name="Green R.E."/>
            <person name="Gustincich S."/>
            <person name="Harbers M."/>
            <person name="Hayashi Y."/>
            <person name="Hensch T.K."/>
            <person name="Hirokawa N."/>
            <person name="Hill D."/>
            <person name="Huminiecki L."/>
            <person name="Iacono M."/>
            <person name="Ikeo K."/>
            <person name="Iwama A."/>
            <person name="Ishikawa T."/>
            <person name="Jakt M."/>
            <person name="Kanapin A."/>
            <person name="Katoh M."/>
            <person name="Kawasawa Y."/>
            <person name="Kelso J."/>
            <person name="Kitamura H."/>
            <person name="Kitano H."/>
            <person name="Kollias G."/>
            <person name="Krishnan S.P."/>
            <person name="Kruger A."/>
            <person name="Kummerfeld S.K."/>
            <person name="Kurochkin I.V."/>
            <person name="Lareau L.F."/>
            <person name="Lazarevic D."/>
            <person name="Lipovich L."/>
            <person name="Liu J."/>
            <person name="Liuni S."/>
            <person name="McWilliam S."/>
            <person name="Madan Babu M."/>
            <person name="Madera M."/>
            <person name="Marchionni L."/>
            <person name="Matsuda H."/>
            <person name="Matsuzawa S."/>
            <person name="Miki H."/>
            <person name="Mignone F."/>
            <person name="Miyake S."/>
            <person name="Morris K."/>
            <person name="Mottagui-Tabar S."/>
            <person name="Mulder N."/>
            <person name="Nakano N."/>
            <person name="Nakauchi H."/>
            <person name="Ng P."/>
            <person name="Nilsson R."/>
            <person name="Nishiguchi S."/>
            <person name="Nishikawa S."/>
            <person name="Nori F."/>
            <person name="Ohara O."/>
            <person name="Okazaki Y."/>
            <person name="Orlando V."/>
            <person name="Pang K.C."/>
            <person name="Pavan W.J."/>
            <person name="Pavesi G."/>
            <person name="Pesole G."/>
            <person name="Petrovsky N."/>
            <person name="Piazza S."/>
            <person name="Reed J."/>
            <person name="Reid J.F."/>
            <person name="Ring B.Z."/>
            <person name="Ringwald M."/>
            <person name="Rost B."/>
            <person name="Ruan Y."/>
            <person name="Salzberg S.L."/>
            <person name="Sandelin A."/>
            <person name="Schneider C."/>
            <person name="Schoenbach C."/>
            <person name="Sekiguchi K."/>
            <person name="Semple C.A."/>
            <person name="Seno S."/>
            <person name="Sessa L."/>
            <person name="Sheng Y."/>
            <person name="Shibata Y."/>
            <person name="Shimada H."/>
            <person name="Shimada K."/>
            <person name="Silva D."/>
            <person name="Sinclair B."/>
            <person name="Sperling S."/>
            <person name="Stupka E."/>
            <person name="Sugiura K."/>
            <person name="Sultana R."/>
            <person name="Takenaka Y."/>
            <person name="Taki K."/>
            <person name="Tammoja K."/>
            <person name="Tan S.L."/>
            <person name="Tang S."/>
            <person name="Taylor M.S."/>
            <person name="Tegner J."/>
            <person name="Teichmann S.A."/>
            <person name="Ueda H.R."/>
            <person name="van Nimwegen E."/>
            <person name="Verardo R."/>
            <person name="Wei C.L."/>
            <person name="Yagi K."/>
            <person name="Yamanishi H."/>
            <person name="Zabarovsky E."/>
            <person name="Zhu S."/>
            <person name="Zimmer A."/>
            <person name="Hide W."/>
            <person name="Bult C."/>
            <person name="Grimmond S.M."/>
            <person name="Teasdale R.D."/>
            <person name="Liu E.T."/>
            <person name="Brusic V."/>
            <person name="Quackenbush J."/>
            <person name="Wahlestedt C."/>
            <person name="Mattick J.S."/>
            <person name="Hume D.A."/>
            <person name="Kai C."/>
            <person name="Sasaki D."/>
            <person name="Tomaru Y."/>
            <person name="Fukuda S."/>
            <person name="Kanamori-Katayama M."/>
            <person name="Suzuki M."/>
            <person name="Aoki J."/>
            <person name="Arakawa T."/>
            <person name="Iida J."/>
            <person name="Imamura K."/>
            <person name="Itoh M."/>
            <person name="Kato T."/>
            <person name="Kawaji H."/>
            <person name="Kawagashira N."/>
            <person name="Kawashima T."/>
            <person name="Kojima M."/>
            <person name="Kondo S."/>
            <person name="Konno H."/>
            <person name="Nakano K."/>
            <person name="Ninomiya N."/>
            <person name="Nishio T."/>
            <person name="Okada M."/>
            <person name="Plessy C."/>
            <person name="Shibata K."/>
            <person name="Shiraki T."/>
            <person name="Suzuki S."/>
            <person name="Tagami M."/>
            <person name="Waki K."/>
            <person name="Watahiki A."/>
            <person name="Okamura-Oho Y."/>
            <person name="Suzuki H."/>
            <person name="Kawai J."/>
            <person name="Hayashizaki Y."/>
        </authorList>
    </citation>
    <scope>NUCLEOTIDE SEQUENCE [LARGE SCALE MRNA] (ISOFORM 2)</scope>
</reference>
<reference key="2">
    <citation type="journal article" date="2009" name="PLoS Biol.">
        <title>Lineage-specific biology revealed by a finished genome assembly of the mouse.</title>
        <authorList>
            <person name="Church D.M."/>
            <person name="Goodstadt L."/>
            <person name="Hillier L.W."/>
            <person name="Zody M.C."/>
            <person name="Goldstein S."/>
            <person name="She X."/>
            <person name="Bult C.J."/>
            <person name="Agarwala R."/>
            <person name="Cherry J.L."/>
            <person name="DiCuccio M."/>
            <person name="Hlavina W."/>
            <person name="Kapustin Y."/>
            <person name="Meric P."/>
            <person name="Maglott D."/>
            <person name="Birtle Z."/>
            <person name="Marques A.C."/>
            <person name="Graves T."/>
            <person name="Zhou S."/>
            <person name="Teague B."/>
            <person name="Potamousis K."/>
            <person name="Churas C."/>
            <person name="Place M."/>
            <person name="Herschleb J."/>
            <person name="Runnheim R."/>
            <person name="Forrest D."/>
            <person name="Amos-Landgraf J."/>
            <person name="Schwartz D.C."/>
            <person name="Cheng Z."/>
            <person name="Lindblad-Toh K."/>
            <person name="Eichler E.E."/>
            <person name="Ponting C.P."/>
        </authorList>
    </citation>
    <scope>NUCLEOTIDE SEQUENCE [LARGE SCALE GENOMIC DNA]</scope>
    <source>
        <strain>C57BL/6J</strain>
    </source>
</reference>
<reference key="3">
    <citation type="journal article" date="2004" name="Genome Res.">
        <title>The status, quality, and expansion of the NIH full-length cDNA project: the Mammalian Gene Collection (MGC).</title>
        <authorList>
            <consortium name="The MGC Project Team"/>
        </authorList>
    </citation>
    <scope>NUCLEOTIDE SEQUENCE [LARGE SCALE MRNA] (ISOFORM 2)</scope>
</reference>
<reference evidence="8" key="4">
    <citation type="journal article" date="2003" name="DNA Res.">
        <title>Prediction of the coding sequences of mouse homologues of KIAA gene: III. The complete nucleotide sequences of 500 mouse KIAA-homologous cDNAs identified by screening of terminal sequences of cDNA clones randomly sampled from size-fractionated libraries.</title>
        <authorList>
            <person name="Okazaki N."/>
            <person name="Kikuno R."/>
            <person name="Ohara R."/>
            <person name="Inamoto S."/>
            <person name="Koseki H."/>
            <person name="Hiraoka S."/>
            <person name="Saga Y."/>
            <person name="Nagase T."/>
            <person name="Ohara O."/>
            <person name="Koga H."/>
        </authorList>
    </citation>
    <scope>NUCLEOTIDE SEQUENCE [LARGE SCALE MRNA] OF 848-1261</scope>
    <source>
        <tissue evidence="8">Embryonic tail</tissue>
    </source>
</reference>
<reference key="5">
    <citation type="journal article" date="2010" name="Cell">
        <title>A tissue-specific atlas of mouse protein phosphorylation and expression.</title>
        <authorList>
            <person name="Huttlin E.L."/>
            <person name="Jedrychowski M.P."/>
            <person name="Elias J.E."/>
            <person name="Goswami T."/>
            <person name="Rad R."/>
            <person name="Beausoleil S.A."/>
            <person name="Villen J."/>
            <person name="Haas W."/>
            <person name="Sowa M.E."/>
            <person name="Gygi S.P."/>
        </authorList>
    </citation>
    <scope>IDENTIFICATION BY MASS SPECTROMETRY [LARGE SCALE ANALYSIS]</scope>
    <source>
        <tissue>Kidney</tissue>
    </source>
</reference>
<reference key="6">
    <citation type="journal article" date="2010" name="Gene Expr. Patterns">
        <title>Autism susceptibility candidate 2 (Auts2) encodes a nuclear protein expressed in developing brain regions implicated in autism neuropathology.</title>
        <authorList>
            <person name="Bedogni F."/>
            <person name="Hodge R.D."/>
            <person name="Nelson B.R."/>
            <person name="Frederick E.A."/>
            <person name="Shiba N."/>
            <person name="Daza R.A."/>
            <person name="Hevner R.F."/>
        </authorList>
    </citation>
    <scope>SUBCELLULAR LOCATION</scope>
    <scope>DEVELOPMENTAL STAGE</scope>
    <scope>TISSUE SPECIFICITY</scope>
</reference>
<reference key="7">
    <citation type="journal article" date="2014" name="Cell Rep.">
        <title>Cytoskeletal regulation by AUTS2 in neuronal migration and neuritogenesis.</title>
        <authorList>
            <person name="Hori K."/>
            <person name="Nagai T."/>
            <person name="Shan W."/>
            <person name="Sakamoto A."/>
            <person name="Taya S."/>
            <person name="Hashimoto R."/>
            <person name="Hayashi T."/>
            <person name="Abe M."/>
            <person name="Yamazaki M."/>
            <person name="Nakao K."/>
            <person name="Nishioka T."/>
            <person name="Sakimura K."/>
            <person name="Yamada K."/>
            <person name="Kaibuchi K."/>
            <person name="Hoshino M."/>
        </authorList>
    </citation>
    <scope>FUNCTION</scope>
    <scope>INTERACTION WITH PREX1; DOCK1 AND ELMO2</scope>
    <scope>SUBCELLULAR LOCATION</scope>
    <scope>DOMAIN</scope>
    <scope>ALTERNATIVE SPLICING</scope>
    <scope>TISSUE SPECIFICITY</scope>
</reference>
<reference key="8">
    <citation type="journal article" date="2014" name="Nature">
        <title>An AUTS2-polycomb complex activates gene expression in the CNS.</title>
        <authorList>
            <person name="Gao Z."/>
            <person name="Lee P."/>
            <person name="Stafford J.M."/>
            <person name="von Schimmelmann M."/>
            <person name="Schaefer A."/>
            <person name="Reinberg D."/>
        </authorList>
    </citation>
    <scope>DISRUPTION PHENOTYPE</scope>
    <scope>SUBCELLULAR LOCATION</scope>
    <scope>IDENTIFICATION IN A COMPLEX WITH PCGF5 AND RNF2</scope>
    <scope>TISSUE SPECIFICITY</scope>
</reference>
<accession>A0A087WPF7</accession>
<accession>E9PWJ4</accession>
<accession>Q6ZQB3</accession>
<accession>Q8BWI6</accession>
<name>AUTS2_MOUSE</name>
<protein>
    <recommendedName>
        <fullName>Autism susceptibility gene 2 protein homolog</fullName>
    </recommendedName>
</protein>
<comment type="function">
    <text evidence="1 5">Component of a Polycomb group (PcG) multiprotein PRC1-like complex, a complex class required to maintain the transcriptionally repressive state of many genes, including Hox genes, throughout development. PcG PRC1 complex acts via chromatin remodeling and modification of histones; it mediates monoubiquitination of histone H2A 'Lys-119', rendering chromatin heritably changed in its expressibility. The PRC1-like complex that contains PCGF5, RNF2, CSNK2B, RYBP and AUTS2 has decreased histone H2A ubiquitination activity, due to the phosphorylation of RNF2 by CSNK2B. As a consequence, the complex mediates transcriptional activation (By similarity). In the cytoplasm, plays a role in axon and dendrite elongation and in neuronal migration during embryonic brain development. Promotes reorganization of the actin cytoskeleton, lamellipodia formation and neurite elongation via its interaction with RAC guanine nucleotide exchange factors, which then leads to the activation of RAC1 (PubMed:25533347).</text>
</comment>
<comment type="subunit">
    <text evidence="1 5 7">Component of a PRC1-like complex that contains PCGF5, RNF2, CSNK2B, RYBP and AUTS2 (PubMed:25519132). Within this complex, interacts directly with PCGF5 and CSNK2B (By similarity). Interacts with the histone acetyltransferase EP300/p300 (By similarity). Interacts (via Pro-rich region) with PREX1, DOCK1 and ELMO2 (PubMed:25533347).</text>
</comment>
<comment type="interaction">
    <interactant intactId="EBI-27122375">
        <id>A0A087WPF7</id>
    </interactant>
    <interactant intactId="EBI-3953360">
        <id>B2RWS6</id>
        <label>Ep300</label>
    </interactant>
    <organismsDiffer>false</organismsDiffer>
    <experiments>3</experiments>
</comment>
<comment type="interaction">
    <interactant intactId="EBI-27122375">
        <id>A0A087WPF7</id>
    </interactant>
    <interactant intactId="EBI-30865042">
        <id>Q61985</id>
        <label>Nfe2l1</label>
    </interactant>
    <organismsDiffer>false</organismsDiffer>
    <experiments>3</experiments>
</comment>
<comment type="interaction">
    <interactant intactId="EBI-27122375">
        <id>A0A087WPF7</id>
    </interactant>
    <interactant intactId="EBI-607499">
        <id>Q99K48</id>
        <label>Nono</label>
    </interactant>
    <organismsDiffer>false</organismsDiffer>
    <experiments>4</experiments>
</comment>
<comment type="interaction">
    <interactant intactId="EBI-27122375">
        <id>A0A087WPF7</id>
    </interactant>
    <interactant intactId="EBI-927321">
        <id>Q9CQJ4</id>
        <label>Rnf2</label>
    </interactant>
    <organismsDiffer>false</organismsDiffer>
    <experiments>2</experiments>
</comment>
<comment type="subcellular location">
    <subcellularLocation>
        <location evidence="3 4 5">Nucleus</location>
    </subcellularLocation>
    <subcellularLocation>
        <location evidence="5">Cytoplasm</location>
        <location evidence="5">Cytoskeleton</location>
    </subcellularLocation>
    <subcellularLocation>
        <location evidence="5">Cell projection</location>
        <location evidence="5">Growth cone</location>
    </subcellularLocation>
    <text evidence="4 5">Detected both in cytoplasm and nucleus (PubMed:25533347). Colocalizes with RAC1 at actin-rich growth cones (PubMed:25533347). Detected on the promoter region of actively transcribed genes (PubMed:25519132).</text>
</comment>
<comment type="alternative products">
    <event type="alternative splicing"/>
    <isoform>
        <id>A0A087WPF7-1</id>
        <name>1</name>
        <sequence type="displayed"/>
    </isoform>
    <isoform>
        <id>A0A087WPF7-2</id>
        <name>2</name>
        <sequence type="described" ref="VSP_059125 VSP_059126"/>
    </isoform>
    <isoform>
        <id>A0A087WPF7-3</id>
        <name>3</name>
        <sequence type="described" ref="VSP_059124 VSP_059127"/>
    </isoform>
</comment>
<comment type="tissue specificity">
    <text evidence="3 4 5">Detected in brain cortex in embryo, neonates and adults (at protein level) (PubMed:19948250, PubMed:25519132, PubMed:25533347). Detected in embryonic and adult Purkinje cells in the cerebellum (PubMed:19948250). Detected in dorsal thalamus and in dopaminergic neurons in substantia nigra (PubMed:19948250).</text>
</comment>
<comment type="developmental stage">
    <text evidence="3">Detected in embryonic brain cortex at 15 dpc, and at clearly lower levels in adult brain cortex, hippocampus and in cerebellum Purkinje cells (at protein level) (PubMed:25519132). Very low and barely detectable in embryonic brain at 11 dpc. Detected in the developing brain cortex, thalamus and cerebellum at 12 and 14 dpc. Uniformly expressed all along the preplate at 13 dpc. At 16 dpc, highly expressed in neurons in deep and superficial layers of the frontal cortical region of the preplate, with much lower expression in the caudal region or the preplate. Highly expressed in thalamus at 14 dpc, and at much lower levels in adults. Highly expressed in hippocampus after 13 dpc; expression levels increase subsequently and are high in dentate gyrus and the CA region of the hippocampus at 19 dpc. Expression in dentate gyrus, granule cell layer and the CA region of the hippocampus continues in neonates and into adulthood.</text>
</comment>
<comment type="domain">
    <text evidence="5">The Pro-rich region is important for the interaction with RAC guanine nucleotide exchange factors and the subsequent activation of RAC1, which then promotes lamellipodia formation.</text>
</comment>
<comment type="disruption phenotype">
    <text evidence="4">Brain-specific gene disruption gives rise to no visible phenotype at birth. Mutant mice have normal weight at birth, but then show decreased weight gain over the next few days, decreased milk uptake, impaired motor skills and impaired ultrasonic vocalization after maternal separation.</text>
</comment>
<comment type="similarity">
    <text evidence="6">Belongs to the AUTS2 family.</text>
</comment>
<organism evidence="9">
    <name type="scientific">Mus musculus</name>
    <name type="common">Mouse</name>
    <dbReference type="NCBI Taxonomy" id="10090"/>
    <lineage>
        <taxon>Eukaryota</taxon>
        <taxon>Metazoa</taxon>
        <taxon>Chordata</taxon>
        <taxon>Craniata</taxon>
        <taxon>Vertebrata</taxon>
        <taxon>Euteleostomi</taxon>
        <taxon>Mammalia</taxon>
        <taxon>Eutheria</taxon>
        <taxon>Euarchontoglires</taxon>
        <taxon>Glires</taxon>
        <taxon>Rodentia</taxon>
        <taxon>Myomorpha</taxon>
        <taxon>Muroidea</taxon>
        <taxon>Muridae</taxon>
        <taxon>Murinae</taxon>
        <taxon>Mus</taxon>
        <taxon>Mus</taxon>
    </lineage>
</organism>
<keyword id="KW-0025">Alternative splicing</keyword>
<keyword id="KW-0966">Cell projection</keyword>
<keyword id="KW-0963">Cytoplasm</keyword>
<keyword id="KW-0206">Cytoskeleton</keyword>
<keyword id="KW-0539">Nucleus</keyword>
<keyword id="KW-0597">Phosphoprotein</keyword>
<keyword id="KW-1185">Reference proteome</keyword>
<keyword id="KW-0804">Transcription</keyword>
<keyword id="KW-0805">Transcription regulation</keyword>
<sequence length="1261" mass="138920">MDGPTRGHGLRKKRRSRSQRDRERRSRAGLGTGAAGGIGAGRTRAPSLASSSGSDKEDNGKPPSSAPSRPRPPRRKRRESTSAEEDIIDGFAMTSFVTFEALEKDVAVKPQERAEKRQTPLTKKKREALTNGLSFHSKKSRLSHSHHYSSDRENDRNLCQHLGKRKKMPKGLRQLKPGQNSCRDSDSESASGESKGFQRSSSRERLSDSSAPSSLGTGYFCDSDSDQEEKASDASSEKLFNTVLVNKDPELGVGALPEHNQDAGPIVPKISGLERSQEKSQDCCKEPVFEPVVLKDPHPQLPQLPSQAQAEPQLQIPSPGPDLVPRTEAPPQFPPPSTQPAQGPPEAQLQPAPLPQVQQRPPRPQSPSHLLQQTLPPVQSHPSSQSLSQPLSAYNSSSLSLNSLSSRSSTPAKTQPAPPHISHHPSASPFPLSLPNHSPLHSFTPTLQPPAHSHHPNMFAPPTALPPPPPLTSGSLQVPGHPAGSTYSEQDILRQELNTRFLASQSADRGASLGPPPYLRTEFHQHQHQHQHTHQHTHQHTFTPFPHAIPPTAIMPTPAPPMFDKYPTKVDPFYRHSLFHSYPPAVSGIPPMIPPTGPFGSLQGAFQPKTSNPIDVAARPGTVPHTLLQKDPRLTDPFRPMLRKPGKWCAMHVHIAWQIYHHQQKVKKQMQSDPHKLDFGLKPEFLSRPPGPSLFGAIHHPHDLARPSTLFSAAGAAHPTGTPFGPPPHHSNFLNPAAHLEPFNRPSTFTGLAAVGGNAFGGLGNPSVTPNSVFGHKDSPSVQNFSNPHEPWNRLHRTPPSFPTPPPWLKPGELERSASAAAHDRDRDVDKRDSSVSKDDKERESVEKRHPSHPSPAPPVPVSALGHNRSSTDPTTRGHLNTEAREKDKPKEKERDHSGSRKDLTTEEHKAKESHLPERDGHSHEGRAAGEEPKQLSRVPSPYVRTPGVDSTRPNSTSSREAEPRKGEPAYENPKKNAEVKVKEERKEDHDLPTEAPQAHRTSEAPPPSSSASASVHPGPLASMPMTVGVTGIHAMNSIGSLDRTRMVTPFMGLSPIPGGERFPYPSFHWDPMRDPLRDPYRDLDMHRRDPLGRDFLLRNDPLHRLSTPRLYEADRSFRDREPHDYSHHHHHHHHPLAVDPRREHERGGHLDERERLHVLREDYEHPRLHPVHPASLDGHLPHPSLLTPGLPSMHYPRISPTAGHQNGLLNKTPPTAALSAPPPLISTLGGRPGSPRRTTPLSAEIRERPPSHTLKDIEAR</sequence>
<proteinExistence type="evidence at protein level"/>
<evidence type="ECO:0000250" key="1">
    <source>
        <dbReference type="UniProtKB" id="Q8WXX7"/>
    </source>
</evidence>
<evidence type="ECO:0000256" key="2">
    <source>
        <dbReference type="SAM" id="MobiDB-lite"/>
    </source>
</evidence>
<evidence type="ECO:0000269" key="3">
    <source>
    </source>
</evidence>
<evidence type="ECO:0000269" key="4">
    <source>
    </source>
</evidence>
<evidence type="ECO:0000269" key="5">
    <source>
    </source>
</evidence>
<evidence type="ECO:0000305" key="6"/>
<evidence type="ECO:0000305" key="7">
    <source>
    </source>
</evidence>
<evidence type="ECO:0000312" key="8">
    <source>
        <dbReference type="EMBL" id="BAC97954.1"/>
    </source>
</evidence>
<evidence type="ECO:0000312" key="9">
    <source>
        <dbReference type="Proteomes" id="UP000000589"/>
    </source>
</evidence>
<feature type="chain" id="PRO_0000441889" description="Autism susceptibility gene 2 protein homolog">
    <location>
        <begin position="1"/>
        <end position="1261"/>
    </location>
</feature>
<feature type="region of interest" description="Disordered" evidence="2">
    <location>
        <begin position="1"/>
        <end position="88"/>
    </location>
</feature>
<feature type="region of interest" description="Disordered" evidence="2">
    <location>
        <begin position="105"/>
        <end position="236"/>
    </location>
</feature>
<feature type="region of interest" description="Disordered" evidence="2">
    <location>
        <begin position="251"/>
        <end position="486"/>
    </location>
</feature>
<feature type="region of interest" description="Important for regulation of lamellipodia formation" evidence="5">
    <location>
        <begin position="288"/>
        <end position="471"/>
    </location>
</feature>
<feature type="region of interest" description="Disordered" evidence="2">
    <location>
        <begin position="505"/>
        <end position="545"/>
    </location>
</feature>
<feature type="region of interest" description="Disordered" evidence="2">
    <location>
        <begin position="771"/>
        <end position="1023"/>
    </location>
</feature>
<feature type="region of interest" description="Disordered" evidence="2">
    <location>
        <begin position="1121"/>
        <end position="1148"/>
    </location>
</feature>
<feature type="region of interest" description="Disordered" evidence="2">
    <location>
        <begin position="1201"/>
        <end position="1261"/>
    </location>
</feature>
<feature type="compositionally biased region" description="Basic residues" evidence="2">
    <location>
        <begin position="8"/>
        <end position="17"/>
    </location>
</feature>
<feature type="compositionally biased region" description="Gly residues" evidence="2">
    <location>
        <begin position="30"/>
        <end position="40"/>
    </location>
</feature>
<feature type="compositionally biased region" description="Basic and acidic residues" evidence="2">
    <location>
        <begin position="105"/>
        <end position="118"/>
    </location>
</feature>
<feature type="compositionally biased region" description="Basic residues" evidence="2">
    <location>
        <begin position="136"/>
        <end position="147"/>
    </location>
</feature>
<feature type="compositionally biased region" description="Basic and acidic residues" evidence="2">
    <location>
        <begin position="148"/>
        <end position="158"/>
    </location>
</feature>
<feature type="compositionally biased region" description="Polar residues" evidence="2">
    <location>
        <begin position="177"/>
        <end position="192"/>
    </location>
</feature>
<feature type="compositionally biased region" description="Basic and acidic residues" evidence="2">
    <location>
        <begin position="275"/>
        <end position="298"/>
    </location>
</feature>
<feature type="compositionally biased region" description="Low complexity" evidence="2">
    <location>
        <begin position="301"/>
        <end position="315"/>
    </location>
</feature>
<feature type="compositionally biased region" description="Low complexity" evidence="2">
    <location>
        <begin position="339"/>
        <end position="409"/>
    </location>
</feature>
<feature type="compositionally biased region" description="Polar residues" evidence="2">
    <location>
        <begin position="435"/>
        <end position="446"/>
    </location>
</feature>
<feature type="compositionally biased region" description="Basic residues" evidence="2">
    <location>
        <begin position="526"/>
        <end position="539"/>
    </location>
</feature>
<feature type="compositionally biased region" description="Pro residues" evidence="2">
    <location>
        <begin position="800"/>
        <end position="809"/>
    </location>
</feature>
<feature type="compositionally biased region" description="Basic and acidic residues" evidence="2">
    <location>
        <begin position="812"/>
        <end position="849"/>
    </location>
</feature>
<feature type="compositionally biased region" description="Polar residues" evidence="2">
    <location>
        <begin position="868"/>
        <end position="879"/>
    </location>
</feature>
<feature type="compositionally biased region" description="Basic and acidic residues" evidence="2">
    <location>
        <begin position="880"/>
        <end position="935"/>
    </location>
</feature>
<feature type="compositionally biased region" description="Basic and acidic residues" evidence="2">
    <location>
        <begin position="960"/>
        <end position="993"/>
    </location>
</feature>
<feature type="compositionally biased region" description="Basic residues" evidence="2">
    <location>
        <begin position="1127"/>
        <end position="1136"/>
    </location>
</feature>
<feature type="compositionally biased region" description="Basic and acidic residues" evidence="2">
    <location>
        <begin position="1245"/>
        <end position="1261"/>
    </location>
</feature>
<feature type="modified residue" description="Phosphoserine" evidence="1">
    <location>
        <position position="1200"/>
    </location>
</feature>
<feature type="modified residue" description="Phosphoserine" evidence="1">
    <location>
        <position position="1235"/>
    </location>
</feature>
<feature type="splice variant" id="VSP_059124" description="In isoform 3.">
    <location>
        <begin position="1"/>
        <end position="457"/>
    </location>
</feature>
<feature type="splice variant" id="VSP_059125" description="In isoform 2.">
    <original>ASDASSEKLFNTVLVNKDPELGVGALPE</original>
    <variation>VRRHPLHCKHNPQGSGCTVTCLLVPVPL</variation>
    <location>
        <begin position="231"/>
        <end position="258"/>
    </location>
</feature>
<feature type="splice variant" id="VSP_059126" description="In isoform 2.">
    <location>
        <begin position="259"/>
        <end position="1261"/>
    </location>
</feature>
<feature type="splice variant" id="VSP_059127" description="In isoform 3.">
    <location>
        <begin position="563"/>
        <end position="577"/>
    </location>
</feature>
<dbReference type="EMBL" id="AK052418">
    <property type="protein sequence ID" value="BAC34980.1"/>
    <property type="molecule type" value="mRNA"/>
</dbReference>
<dbReference type="EMBL" id="AC102355">
    <property type="status" value="NOT_ANNOTATED_CDS"/>
    <property type="molecule type" value="Genomic_DNA"/>
</dbReference>
<dbReference type="EMBL" id="AC103371">
    <property type="status" value="NOT_ANNOTATED_CDS"/>
    <property type="molecule type" value="Genomic_DNA"/>
</dbReference>
<dbReference type="EMBL" id="AC104195">
    <property type="status" value="NOT_ANNOTATED_CDS"/>
    <property type="molecule type" value="Genomic_DNA"/>
</dbReference>
<dbReference type="EMBL" id="AC113203">
    <property type="status" value="NOT_ANNOTATED_CDS"/>
    <property type="molecule type" value="Genomic_DNA"/>
</dbReference>
<dbReference type="EMBL" id="AC113510">
    <property type="status" value="NOT_ANNOTATED_CDS"/>
    <property type="molecule type" value="Genomic_DNA"/>
</dbReference>
<dbReference type="EMBL" id="AC117622">
    <property type="status" value="NOT_ANNOTATED_CDS"/>
    <property type="molecule type" value="Genomic_DNA"/>
</dbReference>
<dbReference type="EMBL" id="AC118932">
    <property type="status" value="NOT_ANNOTATED_CDS"/>
    <property type="molecule type" value="Genomic_DNA"/>
</dbReference>
<dbReference type="EMBL" id="AC121298">
    <property type="status" value="NOT_ANNOTATED_CDS"/>
    <property type="molecule type" value="Genomic_DNA"/>
</dbReference>
<dbReference type="EMBL" id="AC121500">
    <property type="status" value="NOT_ANNOTATED_CDS"/>
    <property type="molecule type" value="Genomic_DNA"/>
</dbReference>
<dbReference type="EMBL" id="AC157928">
    <property type="status" value="NOT_ANNOTATED_CDS"/>
    <property type="molecule type" value="Genomic_DNA"/>
</dbReference>
<dbReference type="EMBL" id="AC164607">
    <property type="status" value="NOT_ANNOTATED_CDS"/>
    <property type="molecule type" value="Genomic_DNA"/>
</dbReference>
<dbReference type="EMBL" id="BC151031">
    <property type="protein sequence ID" value="AAI51032.1"/>
    <property type="molecule type" value="mRNA"/>
</dbReference>
<dbReference type="EMBL" id="BC151047">
    <property type="protein sequence ID" value="AAI51048.1"/>
    <property type="molecule type" value="mRNA"/>
</dbReference>
<dbReference type="EMBL" id="AK129144">
    <property type="protein sequence ID" value="BAC97954.1"/>
    <property type="molecule type" value="mRNA"/>
</dbReference>
<dbReference type="RefSeq" id="NP_001350409.1">
    <molecule id="A0A087WPF7-1"/>
    <property type="nucleotide sequence ID" value="NM_001363480.1"/>
</dbReference>
<dbReference type="RefSeq" id="NP_796021.2">
    <property type="nucleotide sequence ID" value="NM_177047.3"/>
</dbReference>
<dbReference type="FunCoup" id="A0A087WPF7">
    <property type="interactions" value="872"/>
</dbReference>
<dbReference type="IntAct" id="A0A087WPF7">
    <property type="interactions" value="23"/>
</dbReference>
<dbReference type="MINT" id="A0A087WPF7"/>
<dbReference type="STRING" id="10090.ENSMUSP00000139759"/>
<dbReference type="GlyGen" id="A0A087WPF7">
    <property type="glycosylation" value="5 sites, 2 N-linked glycans (2 sites)"/>
</dbReference>
<dbReference type="iPTMnet" id="A0A087WPF7"/>
<dbReference type="PhosphoSitePlus" id="A0A087WPF7"/>
<dbReference type="jPOST" id="A0A087WPF7"/>
<dbReference type="PaxDb" id="10090-ENSMUSP00000139759"/>
<dbReference type="ProteomicsDB" id="277230">
    <molecule id="A0A087WPF7-1"/>
</dbReference>
<dbReference type="ProteomicsDB" id="277231">
    <molecule id="A0A087WPF7-2"/>
</dbReference>
<dbReference type="ProteomicsDB" id="277232">
    <molecule id="A0A087WPF7-3"/>
</dbReference>
<dbReference type="Antibodypedia" id="623">
    <property type="antibodies" value="95 antibodies from 24 providers"/>
</dbReference>
<dbReference type="Ensembl" id="ENSMUST00000161226.11">
    <molecule id="A0A087WPF7-1"/>
    <property type="protein sequence ID" value="ENSMUSP00000159434.2"/>
    <property type="gene ID" value="ENSMUSG00000029673.20"/>
</dbReference>
<dbReference type="Ensembl" id="ENSMUST00000161374.8">
    <molecule id="A0A087WPF7-3"/>
    <property type="protein sequence ID" value="ENSMUSP00000124730.2"/>
    <property type="gene ID" value="ENSMUSG00000029673.20"/>
</dbReference>
<dbReference type="GeneID" id="319974"/>
<dbReference type="UCSC" id="uc008zuv.1">
    <molecule id="A0A087WPF7-1"/>
    <property type="organism name" value="mouse"/>
</dbReference>
<dbReference type="UCSC" id="uc008zuw.1">
    <property type="organism name" value="mouse"/>
</dbReference>
<dbReference type="AGR" id="MGI:1919847"/>
<dbReference type="MGI" id="MGI:1919847">
    <property type="gene designation" value="Auts2"/>
</dbReference>
<dbReference type="VEuPathDB" id="HostDB:ENSMUSG00000029673"/>
<dbReference type="eggNOG" id="ENOG502QSH4">
    <property type="taxonomic scope" value="Eukaryota"/>
</dbReference>
<dbReference type="GeneTree" id="ENSGT00940000154823"/>
<dbReference type="InParanoid" id="A0A087WPF7"/>
<dbReference type="PhylomeDB" id="A0A087WPF7"/>
<dbReference type="Reactome" id="R-MMU-8939243">
    <property type="pathway name" value="RUNX1 interacts with co-factors whose precise effect on RUNX1 targets is not known"/>
</dbReference>
<dbReference type="BioGRID-ORCS" id="319974">
    <property type="hits" value="5 hits in 23 CRISPR screens"/>
</dbReference>
<dbReference type="ChiTaRS" id="Auts2">
    <property type="organism name" value="mouse"/>
</dbReference>
<dbReference type="PRO" id="PR:A0A087WPF7"/>
<dbReference type="Proteomes" id="UP000000589">
    <property type="component" value="Chromosome 5"/>
</dbReference>
<dbReference type="RNAct" id="A0A087WPF7">
    <property type="molecule type" value="protein"/>
</dbReference>
<dbReference type="Bgee" id="ENSMUSG00000029673">
    <property type="expression patterns" value="Expressed in floor plate of midbrain and 275 other cell types or tissues"/>
</dbReference>
<dbReference type="ExpressionAtlas" id="A0A087WPF7">
    <property type="expression patterns" value="baseline and differential"/>
</dbReference>
<dbReference type="GO" id="GO:0005737">
    <property type="term" value="C:cytoplasm"/>
    <property type="evidence" value="ECO:0007669"/>
    <property type="project" value="UniProtKB-KW"/>
</dbReference>
<dbReference type="GO" id="GO:0005856">
    <property type="term" value="C:cytoskeleton"/>
    <property type="evidence" value="ECO:0007669"/>
    <property type="project" value="UniProtKB-SubCell"/>
</dbReference>
<dbReference type="GO" id="GO:0030426">
    <property type="term" value="C:growth cone"/>
    <property type="evidence" value="ECO:0000314"/>
    <property type="project" value="UniProtKB"/>
</dbReference>
<dbReference type="GO" id="GO:0005634">
    <property type="term" value="C:nucleus"/>
    <property type="evidence" value="ECO:0000314"/>
    <property type="project" value="UniProtKB"/>
</dbReference>
<dbReference type="GO" id="GO:0003682">
    <property type="term" value="F:chromatin binding"/>
    <property type="evidence" value="ECO:0000266"/>
    <property type="project" value="MGI"/>
</dbReference>
<dbReference type="GO" id="GO:0030036">
    <property type="term" value="P:actin cytoskeleton organization"/>
    <property type="evidence" value="ECO:0000315"/>
    <property type="project" value="UniProtKB"/>
</dbReference>
<dbReference type="GO" id="GO:0048675">
    <property type="term" value="P:axon extension"/>
    <property type="evidence" value="ECO:0000315"/>
    <property type="project" value="UniProtKB"/>
</dbReference>
<dbReference type="GO" id="GO:0097484">
    <property type="term" value="P:dendrite extension"/>
    <property type="evidence" value="ECO:0000315"/>
    <property type="project" value="UniProtKB"/>
</dbReference>
<dbReference type="GO" id="GO:0098582">
    <property type="term" value="P:innate vocalization behavior"/>
    <property type="evidence" value="ECO:0000315"/>
    <property type="project" value="MGI"/>
</dbReference>
<dbReference type="GO" id="GO:0001764">
    <property type="term" value="P:neuron migration"/>
    <property type="evidence" value="ECO:0000315"/>
    <property type="project" value="UniProtKB"/>
</dbReference>
<dbReference type="GO" id="GO:0010592">
    <property type="term" value="P:positive regulation of lamellipodium assembly"/>
    <property type="evidence" value="ECO:0000315"/>
    <property type="project" value="UniProtKB"/>
</dbReference>
<dbReference type="GO" id="GO:0035022">
    <property type="term" value="P:positive regulation of Rac protein signal transduction"/>
    <property type="evidence" value="ECO:0000315"/>
    <property type="project" value="UniProtKB"/>
</dbReference>
<dbReference type="GO" id="GO:0045944">
    <property type="term" value="P:positive regulation of transcription by RNA polymerase II"/>
    <property type="evidence" value="ECO:0000266"/>
    <property type="project" value="MGI"/>
</dbReference>
<dbReference type="GO" id="GO:0060013">
    <property type="term" value="P:righting reflex"/>
    <property type="evidence" value="ECO:0000315"/>
    <property type="project" value="MGI"/>
</dbReference>
<dbReference type="InterPro" id="IPR023246">
    <property type="entry name" value="AUTS2"/>
</dbReference>
<dbReference type="PANTHER" id="PTHR14429:SF5">
    <property type="entry name" value="AUTISM SUSCEPTIBILITY GENE 2 PROTEIN"/>
    <property type="match status" value="1"/>
</dbReference>
<dbReference type="PANTHER" id="PTHR14429">
    <property type="entry name" value="FIBROSIN FAMILY MEMBER"/>
    <property type="match status" value="1"/>
</dbReference>
<dbReference type="Pfam" id="PF15336">
    <property type="entry name" value="Auts2"/>
    <property type="match status" value="1"/>
</dbReference>
<dbReference type="PRINTS" id="PR02044">
    <property type="entry name" value="FIBROSIN1LPF"/>
</dbReference>